<reference key="1">
    <citation type="journal article" date="2004" name="Science">
        <title>The Ashbya gossypii genome as a tool for mapping the ancient Saccharomyces cerevisiae genome.</title>
        <authorList>
            <person name="Dietrich F.S."/>
            <person name="Voegeli S."/>
            <person name="Brachat S."/>
            <person name="Lerch A."/>
            <person name="Gates K."/>
            <person name="Steiner S."/>
            <person name="Mohr C."/>
            <person name="Poehlmann R."/>
            <person name="Luedi P."/>
            <person name="Choi S."/>
            <person name="Wing R.A."/>
            <person name="Flavier A."/>
            <person name="Gaffney T.D."/>
            <person name="Philippsen P."/>
        </authorList>
    </citation>
    <scope>NUCLEOTIDE SEQUENCE [LARGE SCALE GENOMIC DNA]</scope>
    <source>
        <strain>ATCC 10895 / CBS 109.51 / FGSC 9923 / NRRL Y-1056</strain>
    </source>
</reference>
<reference key="2">
    <citation type="journal article" date="2013" name="G3 (Bethesda)">
        <title>Genomes of Ashbya fungi isolated from insects reveal four mating-type loci, numerous translocations, lack of transposons, and distinct gene duplications.</title>
        <authorList>
            <person name="Dietrich F.S."/>
            <person name="Voegeli S."/>
            <person name="Kuo S."/>
            <person name="Philippsen P."/>
        </authorList>
    </citation>
    <scope>GENOME REANNOTATION</scope>
    <source>
        <strain>ATCC 10895 / CBS 109.51 / FGSC 9923 / NRRL Y-1056</strain>
    </source>
</reference>
<gene>
    <name type="primary">HHOA</name>
    <name type="ordered locus">ACR095W</name>
</gene>
<sequence length="225" mass="23136">MGPKATSGTRGRGKKVGTKTAAPLPKYKDLIVEAVVSLAERGGSSRQAIKKFIRDKYAVGAKFDGQFNLAVKRGLEAGELAQPKGPAGSIKLLKKAAQPKPEEAKRAAKPAKRVVKAAKPAKAKPAKAAKAAKPAKPVKAAKAASAVKPAARKLAKPVVKKVGSKKVATKNAVVGKKSVVSSAASKKLLAKKAVPKKTAGRKPLVGKKVVAVSRKPAAKKLAKSA</sequence>
<evidence type="ECO:0000255" key="1">
    <source>
        <dbReference type="PROSITE-ProRule" id="PRU00837"/>
    </source>
</evidence>
<evidence type="ECO:0000256" key="2">
    <source>
        <dbReference type="SAM" id="MobiDB-lite"/>
    </source>
</evidence>
<name>H1_EREGS</name>
<keyword id="KW-0158">Chromosome</keyword>
<keyword id="KW-0238">DNA-binding</keyword>
<keyword id="KW-0539">Nucleus</keyword>
<keyword id="KW-1185">Reference proteome</keyword>
<comment type="function">
    <text>Could act as an H1-type linker histone.</text>
</comment>
<comment type="subcellular location">
    <subcellularLocation>
        <location evidence="1">Nucleus</location>
    </subcellularLocation>
    <subcellularLocation>
        <location evidence="1">Chromosome</location>
    </subcellularLocation>
</comment>
<comment type="similarity">
    <text evidence="1">Belongs to the histone H1/H5 family.</text>
</comment>
<proteinExistence type="inferred from homology"/>
<accession>Q75C22</accession>
<organism>
    <name type="scientific">Eremothecium gossypii (strain ATCC 10895 / CBS 109.51 / FGSC 9923 / NRRL Y-1056)</name>
    <name type="common">Yeast</name>
    <name type="synonym">Ashbya gossypii</name>
    <dbReference type="NCBI Taxonomy" id="284811"/>
    <lineage>
        <taxon>Eukaryota</taxon>
        <taxon>Fungi</taxon>
        <taxon>Dikarya</taxon>
        <taxon>Ascomycota</taxon>
        <taxon>Saccharomycotina</taxon>
        <taxon>Saccharomycetes</taxon>
        <taxon>Saccharomycetales</taxon>
        <taxon>Saccharomycetaceae</taxon>
        <taxon>Eremothecium</taxon>
    </lineage>
</organism>
<feature type="chain" id="PRO_0000195997" description="Histone H1">
    <location>
        <begin position="1"/>
        <end position="225"/>
    </location>
</feature>
<feature type="domain" description="H15" evidence="1">
    <location>
        <begin position="23"/>
        <end position="94"/>
    </location>
</feature>
<feature type="region of interest" description="Disordered" evidence="2">
    <location>
        <begin position="1"/>
        <end position="20"/>
    </location>
</feature>
<feature type="region of interest" description="Disordered" evidence="2">
    <location>
        <begin position="95"/>
        <end position="147"/>
    </location>
</feature>
<feature type="compositionally biased region" description="Basic residues" evidence="2">
    <location>
        <begin position="107"/>
        <end position="127"/>
    </location>
</feature>
<feature type="compositionally biased region" description="Low complexity" evidence="2">
    <location>
        <begin position="128"/>
        <end position="147"/>
    </location>
</feature>
<protein>
    <recommendedName>
        <fullName>Histone H1</fullName>
    </recommendedName>
</protein>
<dbReference type="EMBL" id="AE016816">
    <property type="protein sequence ID" value="AAS51321.1"/>
    <property type="molecule type" value="Genomic_DNA"/>
</dbReference>
<dbReference type="RefSeq" id="NP_983497.1">
    <property type="nucleotide sequence ID" value="NM_208850.1"/>
</dbReference>
<dbReference type="SMR" id="Q75C22"/>
<dbReference type="STRING" id="284811.Q75C22"/>
<dbReference type="EnsemblFungi" id="AAS51321">
    <property type="protein sequence ID" value="AAS51321"/>
    <property type="gene ID" value="AGOS_ACR095W"/>
</dbReference>
<dbReference type="GeneID" id="4619627"/>
<dbReference type="KEGG" id="ago:AGOS_ACR095W"/>
<dbReference type="eggNOG" id="KOG4012">
    <property type="taxonomic scope" value="Eukaryota"/>
</dbReference>
<dbReference type="HOGENOM" id="CLU_052897_0_0_1"/>
<dbReference type="InParanoid" id="Q75C22"/>
<dbReference type="OMA" id="MISECIA"/>
<dbReference type="OrthoDB" id="1110759at2759"/>
<dbReference type="Proteomes" id="UP000000591">
    <property type="component" value="Chromosome III"/>
</dbReference>
<dbReference type="GO" id="GO:0000786">
    <property type="term" value="C:nucleosome"/>
    <property type="evidence" value="ECO:0007669"/>
    <property type="project" value="InterPro"/>
</dbReference>
<dbReference type="GO" id="GO:0005634">
    <property type="term" value="C:nucleus"/>
    <property type="evidence" value="ECO:0000318"/>
    <property type="project" value="GO_Central"/>
</dbReference>
<dbReference type="GO" id="GO:0003690">
    <property type="term" value="F:double-stranded DNA binding"/>
    <property type="evidence" value="ECO:0000318"/>
    <property type="project" value="GO_Central"/>
</dbReference>
<dbReference type="GO" id="GO:0031492">
    <property type="term" value="F:nucleosomal DNA binding"/>
    <property type="evidence" value="ECO:0000318"/>
    <property type="project" value="GO_Central"/>
</dbReference>
<dbReference type="GO" id="GO:0030527">
    <property type="term" value="F:structural constituent of chromatin"/>
    <property type="evidence" value="ECO:0007669"/>
    <property type="project" value="InterPro"/>
</dbReference>
<dbReference type="GO" id="GO:0030261">
    <property type="term" value="P:chromosome condensation"/>
    <property type="evidence" value="ECO:0000318"/>
    <property type="project" value="GO_Central"/>
</dbReference>
<dbReference type="GO" id="GO:0045910">
    <property type="term" value="P:negative regulation of DNA recombination"/>
    <property type="evidence" value="ECO:0000318"/>
    <property type="project" value="GO_Central"/>
</dbReference>
<dbReference type="GO" id="GO:0006334">
    <property type="term" value="P:nucleosome assembly"/>
    <property type="evidence" value="ECO:0007669"/>
    <property type="project" value="InterPro"/>
</dbReference>
<dbReference type="CDD" id="cd00073">
    <property type="entry name" value="H15"/>
    <property type="match status" value="1"/>
</dbReference>
<dbReference type="Gene3D" id="1.10.10.10">
    <property type="entry name" value="Winged helix-like DNA-binding domain superfamily/Winged helix DNA-binding domain"/>
    <property type="match status" value="1"/>
</dbReference>
<dbReference type="InterPro" id="IPR005819">
    <property type="entry name" value="H1/H5"/>
</dbReference>
<dbReference type="InterPro" id="IPR005818">
    <property type="entry name" value="Histone_H1/H5_H15"/>
</dbReference>
<dbReference type="InterPro" id="IPR036388">
    <property type="entry name" value="WH-like_DNA-bd_sf"/>
</dbReference>
<dbReference type="InterPro" id="IPR036390">
    <property type="entry name" value="WH_DNA-bd_sf"/>
</dbReference>
<dbReference type="PANTHER" id="PTHR11467:SF36">
    <property type="entry name" value="HISTONE 24-RELATED"/>
    <property type="match status" value="1"/>
</dbReference>
<dbReference type="PANTHER" id="PTHR11467">
    <property type="entry name" value="HISTONE H1"/>
    <property type="match status" value="1"/>
</dbReference>
<dbReference type="Pfam" id="PF00538">
    <property type="entry name" value="Linker_histone"/>
    <property type="match status" value="1"/>
</dbReference>
<dbReference type="PRINTS" id="PR00624">
    <property type="entry name" value="HISTONEH5"/>
</dbReference>
<dbReference type="SMART" id="SM00526">
    <property type="entry name" value="H15"/>
    <property type="match status" value="1"/>
</dbReference>
<dbReference type="SUPFAM" id="SSF46785">
    <property type="entry name" value="Winged helix' DNA-binding domain"/>
    <property type="match status" value="1"/>
</dbReference>
<dbReference type="PROSITE" id="PS51504">
    <property type="entry name" value="H15"/>
    <property type="match status" value="1"/>
</dbReference>